<accession>Q97MK4</accession>
<reference key="1">
    <citation type="journal article" date="2001" name="J. Bacteriol.">
        <title>Genome sequence and comparative analysis of the solvent-producing bacterium Clostridium acetobutylicum.</title>
        <authorList>
            <person name="Noelling J."/>
            <person name="Breton G."/>
            <person name="Omelchenko M.V."/>
            <person name="Makarova K.S."/>
            <person name="Zeng Q."/>
            <person name="Gibson R."/>
            <person name="Lee H.M."/>
            <person name="Dubois J."/>
            <person name="Qiu D."/>
            <person name="Hitti J."/>
            <person name="Wolf Y.I."/>
            <person name="Tatusov R.L."/>
            <person name="Sabathe F."/>
            <person name="Doucette-Stamm L.A."/>
            <person name="Soucaille P."/>
            <person name="Daly M.J."/>
            <person name="Bennett G.N."/>
            <person name="Koonin E.V."/>
            <person name="Smith D.R."/>
        </authorList>
    </citation>
    <scope>NUCLEOTIDE SEQUENCE [LARGE SCALE GENOMIC DNA]</scope>
    <source>
        <strain>ATCC 824 / DSM 792 / JCM 1419 / IAM 19013 / LMG 5710 / NBRC 13948 / NRRL B-527 / VKM B-1787 / 2291 / W</strain>
    </source>
</reference>
<reference key="2">
    <citation type="journal article" date="2001" name="Biochemistry">
        <title>Evolution of enzymatic activities in the enolase superfamily: functional assignment of unknown proteins in Bacillus subtilis and Escherichia coli as L-Ala-D/L-Glu epimerases.</title>
        <authorList>
            <person name="Schmidt D.M.Z."/>
            <person name="Hubbard B.K."/>
            <person name="Gerlt J.A."/>
        </authorList>
    </citation>
    <scope>FUNCTION</scope>
    <scope>CATALYTIC ACTIVITY</scope>
</reference>
<comment type="function">
    <text evidence="2">Catalyzes the epimerization of L-Ala-D-Glu to L-Ala-L-Glu and has probably a role in the metabolism of the murein peptide, of which L-Ala-D-Glu is a component. Is also able to catalyze the epimerization of L-Ala-D-Asp.</text>
</comment>
<comment type="catalytic activity">
    <reaction evidence="2">
        <text>L-alanyl-L-glutamate = L-alanyl-D-glutamate</text>
        <dbReference type="Rhea" id="RHEA:28394"/>
        <dbReference type="ChEBI" id="CHEBI:61395"/>
        <dbReference type="ChEBI" id="CHEBI:61396"/>
        <dbReference type="EC" id="5.1.1.20"/>
    </reaction>
</comment>
<comment type="cofactor">
    <cofactor evidence="1">
        <name>Mg(2+)</name>
        <dbReference type="ChEBI" id="CHEBI:18420"/>
    </cofactor>
    <text evidence="1">Binds 1 Mg(2+) ion per subunit.</text>
</comment>
<comment type="pathway">
    <text>Cell wall degradation; peptidoglycan degradation.</text>
</comment>
<comment type="similarity">
    <text evidence="3">Belongs to the mandelate racemase/muconate lactonizing enzyme family.</text>
</comment>
<name>AEEP_CLOAB</name>
<protein>
    <recommendedName>
        <fullName>L-Ala-D/L-Glu epimerase</fullName>
        <shortName>AE epimerase</shortName>
        <shortName>AEE</shortName>
        <ecNumber evidence="2">5.1.1.20</ecNumber>
    </recommendedName>
</protein>
<evidence type="ECO:0000250" key="1"/>
<evidence type="ECO:0000269" key="2">
    <source>
    </source>
</evidence>
<evidence type="ECO:0000305" key="3"/>
<sequence>MIIKDIVIGHLSVPLKKPFKTAVRSVNSVNDVVVKIITDTGNVGFGSAASTGLVTGDITESIEGAINNYIKRSIVGMDIEDFEAILIKLDNCIVGNTSAKAAVDIALYDLYGQRYGAPLYKLLGGFRNKLETDITISVNSPEEMSRDSVDAVKLGYKTLKIKVGKNPKLDIKRMREIRKAIGYEVNLRIDANQGWQPKEAIRALNEIENEGLKIELVEQPVKAWNLEGLKMVTDNVNIPVMADESVFSPKDAARVMEMRACDLINIKLMKTGGIHNALKICALAEVYGMECMLGCMLEGKVSVTAAVHLAAAKRIITKIDLDGPVLCSRDDVVGGAMYDNSNIVLVDEPGLGIEGINN</sequence>
<proteinExistence type="evidence at protein level"/>
<keyword id="KW-0961">Cell wall biogenesis/degradation</keyword>
<keyword id="KW-0413">Isomerase</keyword>
<keyword id="KW-0460">Magnesium</keyword>
<keyword id="KW-0479">Metal-binding</keyword>
<keyword id="KW-1185">Reference proteome</keyword>
<feature type="chain" id="PRO_0000388971" description="L-Ala-D/L-Glu epimerase">
    <location>
        <begin position="1"/>
        <end position="358"/>
    </location>
</feature>
<feature type="active site" description="Proton acceptor; specific for (R)-substrate epimerization" evidence="1">
    <location>
        <position position="162"/>
    </location>
</feature>
<feature type="active site" description="Proton acceptor; specific for (S)-substrate epimerization" evidence="1">
    <location>
        <position position="267"/>
    </location>
</feature>
<feature type="binding site" evidence="1">
    <location>
        <position position="24"/>
    </location>
    <ligand>
        <name>substrate</name>
    </ligand>
</feature>
<feature type="binding site" evidence="1">
    <location>
        <position position="135"/>
    </location>
    <ligand>
        <name>substrate</name>
    </ligand>
</feature>
<feature type="binding site" evidence="1">
    <location>
        <position position="160"/>
    </location>
    <ligand>
        <name>substrate</name>
    </ligand>
</feature>
<feature type="binding site" evidence="1">
    <location>
        <position position="190"/>
    </location>
    <ligand>
        <name>Mg(2+)</name>
        <dbReference type="ChEBI" id="CHEBI:18420"/>
    </ligand>
</feature>
<feature type="binding site" evidence="1">
    <location>
        <position position="218"/>
    </location>
    <ligand>
        <name>Mg(2+)</name>
        <dbReference type="ChEBI" id="CHEBI:18420"/>
    </ligand>
</feature>
<feature type="binding site" evidence="1">
    <location>
        <position position="243"/>
    </location>
    <ligand>
        <name>Mg(2+)</name>
        <dbReference type="ChEBI" id="CHEBI:18420"/>
    </ligand>
</feature>
<feature type="binding site" evidence="1">
    <location>
        <position position="295"/>
    </location>
    <ligand>
        <name>substrate</name>
    </ligand>
</feature>
<feature type="binding site" evidence="1">
    <location>
        <position position="320"/>
    </location>
    <ligand>
        <name>substrate</name>
    </ligand>
</feature>
<feature type="binding site" evidence="1">
    <location>
        <position position="322"/>
    </location>
    <ligand>
        <name>substrate</name>
    </ligand>
</feature>
<gene>
    <name type="ordered locus">CA_C0192</name>
</gene>
<organism>
    <name type="scientific">Clostridium acetobutylicum (strain ATCC 824 / DSM 792 / JCM 1419 / IAM 19013 / LMG 5710 / NBRC 13948 / NRRL B-527 / VKM B-1787 / 2291 / W)</name>
    <dbReference type="NCBI Taxonomy" id="272562"/>
    <lineage>
        <taxon>Bacteria</taxon>
        <taxon>Bacillati</taxon>
        <taxon>Bacillota</taxon>
        <taxon>Clostridia</taxon>
        <taxon>Eubacteriales</taxon>
        <taxon>Clostridiaceae</taxon>
        <taxon>Clostridium</taxon>
    </lineage>
</organism>
<dbReference type="EC" id="5.1.1.20" evidence="2"/>
<dbReference type="EMBL" id="AE001437">
    <property type="protein sequence ID" value="AAK78174.1"/>
    <property type="molecule type" value="Genomic_DNA"/>
</dbReference>
<dbReference type="PIR" id="C96923">
    <property type="entry name" value="C96923"/>
</dbReference>
<dbReference type="RefSeq" id="NP_346834.1">
    <property type="nucleotide sequence ID" value="NC_003030.1"/>
</dbReference>
<dbReference type="RefSeq" id="WP_010963516.1">
    <property type="nucleotide sequence ID" value="NC_003030.1"/>
</dbReference>
<dbReference type="SMR" id="Q97MK4"/>
<dbReference type="STRING" id="272562.CA_C0192"/>
<dbReference type="KEGG" id="cac:CA_C0192"/>
<dbReference type="PATRIC" id="fig|272562.8.peg.378"/>
<dbReference type="eggNOG" id="COG4948">
    <property type="taxonomic scope" value="Bacteria"/>
</dbReference>
<dbReference type="HOGENOM" id="CLU_030273_4_0_9"/>
<dbReference type="OrthoDB" id="9775391at2"/>
<dbReference type="UniPathway" id="UPA00549"/>
<dbReference type="Proteomes" id="UP000000814">
    <property type="component" value="Chromosome"/>
</dbReference>
<dbReference type="GO" id="GO:0103031">
    <property type="term" value="F:L-Ala-D/L-Glu epimerase activity"/>
    <property type="evidence" value="ECO:0007669"/>
    <property type="project" value="UniProtKB-EC"/>
</dbReference>
<dbReference type="GO" id="GO:0046872">
    <property type="term" value="F:metal ion binding"/>
    <property type="evidence" value="ECO:0007669"/>
    <property type="project" value="UniProtKB-KW"/>
</dbReference>
<dbReference type="GO" id="GO:0009063">
    <property type="term" value="P:amino acid catabolic process"/>
    <property type="evidence" value="ECO:0007669"/>
    <property type="project" value="InterPro"/>
</dbReference>
<dbReference type="GO" id="GO:0016998">
    <property type="term" value="P:cell wall macromolecule catabolic process"/>
    <property type="evidence" value="ECO:0007669"/>
    <property type="project" value="UniProtKB-UniPathway"/>
</dbReference>
<dbReference type="GO" id="GO:0071555">
    <property type="term" value="P:cell wall organization"/>
    <property type="evidence" value="ECO:0007669"/>
    <property type="project" value="UniProtKB-KW"/>
</dbReference>
<dbReference type="CDD" id="cd03319">
    <property type="entry name" value="L-Ala-DL-Glu_epimerase"/>
    <property type="match status" value="1"/>
</dbReference>
<dbReference type="FunFam" id="3.30.390.10:FF:000009">
    <property type="entry name" value="Hydrophobic dipeptide epimerase"/>
    <property type="match status" value="1"/>
</dbReference>
<dbReference type="Gene3D" id="3.20.20.120">
    <property type="entry name" value="Enolase-like C-terminal domain"/>
    <property type="match status" value="1"/>
</dbReference>
<dbReference type="Gene3D" id="3.30.390.10">
    <property type="entry name" value="Enolase-like, N-terminal domain"/>
    <property type="match status" value="1"/>
</dbReference>
<dbReference type="InterPro" id="IPR034603">
    <property type="entry name" value="Dipeptide_epimerase"/>
</dbReference>
<dbReference type="InterPro" id="IPR036849">
    <property type="entry name" value="Enolase-like_C_sf"/>
</dbReference>
<dbReference type="InterPro" id="IPR029017">
    <property type="entry name" value="Enolase-like_N"/>
</dbReference>
<dbReference type="InterPro" id="IPR029065">
    <property type="entry name" value="Enolase_C-like"/>
</dbReference>
<dbReference type="InterPro" id="IPR018110">
    <property type="entry name" value="Mandel_Rmase/mucon_lact_enz_CS"/>
</dbReference>
<dbReference type="InterPro" id="IPR013342">
    <property type="entry name" value="Mandelate_racemase_C"/>
</dbReference>
<dbReference type="InterPro" id="IPR013341">
    <property type="entry name" value="Mandelate_racemase_N_dom"/>
</dbReference>
<dbReference type="PANTHER" id="PTHR48073:SF2">
    <property type="entry name" value="O-SUCCINYLBENZOATE SYNTHASE"/>
    <property type="match status" value="1"/>
</dbReference>
<dbReference type="PANTHER" id="PTHR48073">
    <property type="entry name" value="O-SUCCINYLBENZOATE SYNTHASE-RELATED"/>
    <property type="match status" value="1"/>
</dbReference>
<dbReference type="Pfam" id="PF13378">
    <property type="entry name" value="MR_MLE_C"/>
    <property type="match status" value="1"/>
</dbReference>
<dbReference type="Pfam" id="PF02746">
    <property type="entry name" value="MR_MLE_N"/>
    <property type="match status" value="1"/>
</dbReference>
<dbReference type="SFLD" id="SFLDF00010">
    <property type="entry name" value="dipeptide_epimerase"/>
    <property type="match status" value="1"/>
</dbReference>
<dbReference type="SFLD" id="SFLDS00001">
    <property type="entry name" value="Enolase"/>
    <property type="match status" value="2"/>
</dbReference>
<dbReference type="SFLD" id="SFLDF00009">
    <property type="entry name" value="o-succinylbenzoate_synthase"/>
    <property type="match status" value="1"/>
</dbReference>
<dbReference type="SMART" id="SM00922">
    <property type="entry name" value="MR_MLE"/>
    <property type="match status" value="1"/>
</dbReference>
<dbReference type="SUPFAM" id="SSF51604">
    <property type="entry name" value="Enolase C-terminal domain-like"/>
    <property type="match status" value="1"/>
</dbReference>
<dbReference type="SUPFAM" id="SSF54826">
    <property type="entry name" value="Enolase N-terminal domain-like"/>
    <property type="match status" value="1"/>
</dbReference>
<dbReference type="PROSITE" id="PS00908">
    <property type="entry name" value="MR_MLE_1"/>
    <property type="match status" value="1"/>
</dbReference>